<feature type="signal peptide" evidence="2">
    <location>
        <begin position="1"/>
        <end position="21"/>
    </location>
</feature>
<feature type="chain" id="PRO_0000403076" description="L-type lectin-domain containing receptor kinase I.7">
    <location>
        <begin position="22"/>
        <end position="668"/>
    </location>
</feature>
<feature type="topological domain" description="Extracellular" evidence="2">
    <location>
        <begin position="22"/>
        <end position="285"/>
    </location>
</feature>
<feature type="transmembrane region" description="Helical" evidence="2">
    <location>
        <begin position="286"/>
        <end position="306"/>
    </location>
</feature>
<feature type="topological domain" description="Cytoplasmic" evidence="2">
    <location>
        <begin position="307"/>
        <end position="668"/>
    </location>
</feature>
<feature type="domain" description="Protein kinase" evidence="3">
    <location>
        <begin position="341"/>
        <end position="620"/>
    </location>
</feature>
<feature type="region of interest" description="Legume-lectin like" evidence="6">
    <location>
        <begin position="24"/>
        <end position="256"/>
    </location>
</feature>
<feature type="active site" description="Proton acceptor" evidence="3">
    <location>
        <position position="468"/>
    </location>
</feature>
<feature type="binding site" evidence="3">
    <location>
        <begin position="347"/>
        <end position="355"/>
    </location>
    <ligand>
        <name>ATP</name>
        <dbReference type="ChEBI" id="CHEBI:30616"/>
    </ligand>
</feature>
<feature type="binding site" evidence="3">
    <location>
        <position position="372"/>
    </location>
    <ligand>
        <name>ATP</name>
        <dbReference type="ChEBI" id="CHEBI:30616"/>
    </ligand>
</feature>
<feature type="glycosylation site" description="N-linked (GlcNAc...) asparagine" evidence="2">
    <location>
        <position position="56"/>
    </location>
</feature>
<feature type="glycosylation site" description="N-linked (GlcNAc...) asparagine" evidence="2">
    <location>
        <position position="125"/>
    </location>
</feature>
<feature type="glycosylation site" description="N-linked (GlcNAc...) asparagine" evidence="2">
    <location>
        <position position="167"/>
    </location>
</feature>
<feature type="glycosylation site" description="N-linked (GlcNAc...) asparagine" evidence="2">
    <location>
        <position position="201"/>
    </location>
</feature>
<feature type="glycosylation site" description="N-linked (GlcNAc...) asparagine" evidence="2">
    <location>
        <position position="223"/>
    </location>
</feature>
<keyword id="KW-0067">ATP-binding</keyword>
<keyword id="KW-1003">Cell membrane</keyword>
<keyword id="KW-0325">Glycoprotein</keyword>
<keyword id="KW-0418">Kinase</keyword>
<keyword id="KW-0430">Lectin</keyword>
<keyword id="KW-0472">Membrane</keyword>
<keyword id="KW-0547">Nucleotide-binding</keyword>
<keyword id="KW-0611">Plant defense</keyword>
<keyword id="KW-0675">Receptor</keyword>
<keyword id="KW-1185">Reference proteome</keyword>
<keyword id="KW-0723">Serine/threonine-protein kinase</keyword>
<keyword id="KW-0732">Signal</keyword>
<keyword id="KW-0808">Transferase</keyword>
<keyword id="KW-0812">Transmembrane</keyword>
<keyword id="KW-1133">Transmembrane helix</keyword>
<dbReference type="EC" id="2.7.11.1" evidence="3"/>
<dbReference type="EMBL" id="AB026632">
    <property type="protein sequence ID" value="BAA97507.1"/>
    <property type="molecule type" value="Genomic_DNA"/>
</dbReference>
<dbReference type="EMBL" id="CP002688">
    <property type="protein sequence ID" value="AED97301.1"/>
    <property type="molecule type" value="Genomic_DNA"/>
</dbReference>
<dbReference type="EMBL" id="AK175514">
    <property type="protein sequence ID" value="BAD43277.1"/>
    <property type="molecule type" value="mRNA"/>
</dbReference>
<dbReference type="RefSeq" id="NP_200835.1">
    <property type="nucleotide sequence ID" value="NM_125420.4"/>
</dbReference>
<dbReference type="SMR" id="Q9LSS0"/>
<dbReference type="STRING" id="3702.Q9LSS0"/>
<dbReference type="GlyCosmos" id="Q9LSS0">
    <property type="glycosylation" value="5 sites, No reported glycans"/>
</dbReference>
<dbReference type="GlyGen" id="Q9LSS0">
    <property type="glycosylation" value="5 sites"/>
</dbReference>
<dbReference type="PaxDb" id="3702-AT5G60270.1"/>
<dbReference type="ProteomicsDB" id="238673"/>
<dbReference type="EnsemblPlants" id="AT5G60270.1">
    <property type="protein sequence ID" value="AT5G60270.1"/>
    <property type="gene ID" value="AT5G60270"/>
</dbReference>
<dbReference type="GeneID" id="836149"/>
<dbReference type="Gramene" id="AT5G60270.1">
    <property type="protein sequence ID" value="AT5G60270.1"/>
    <property type="gene ID" value="AT5G60270"/>
</dbReference>
<dbReference type="KEGG" id="ath:AT5G60270"/>
<dbReference type="Araport" id="AT5G60270"/>
<dbReference type="TAIR" id="AT5G60270">
    <property type="gene designation" value="LECRK-I.7"/>
</dbReference>
<dbReference type="eggNOG" id="ENOG502QSJ4">
    <property type="taxonomic scope" value="Eukaryota"/>
</dbReference>
<dbReference type="HOGENOM" id="CLU_000288_62_3_1"/>
<dbReference type="InParanoid" id="Q9LSS0"/>
<dbReference type="OMA" id="TRMGRAT"/>
<dbReference type="PhylomeDB" id="Q9LSS0"/>
<dbReference type="PRO" id="PR:Q9LSS0"/>
<dbReference type="Proteomes" id="UP000006548">
    <property type="component" value="Chromosome 5"/>
</dbReference>
<dbReference type="ExpressionAtlas" id="Q9LSS0">
    <property type="expression patterns" value="baseline and differential"/>
</dbReference>
<dbReference type="GO" id="GO:0005886">
    <property type="term" value="C:plasma membrane"/>
    <property type="evidence" value="ECO:0007669"/>
    <property type="project" value="UniProtKB-SubCell"/>
</dbReference>
<dbReference type="GO" id="GO:0005524">
    <property type="term" value="F:ATP binding"/>
    <property type="evidence" value="ECO:0007669"/>
    <property type="project" value="UniProtKB-KW"/>
</dbReference>
<dbReference type="GO" id="GO:0030246">
    <property type="term" value="F:carbohydrate binding"/>
    <property type="evidence" value="ECO:0007669"/>
    <property type="project" value="UniProtKB-KW"/>
</dbReference>
<dbReference type="GO" id="GO:0106310">
    <property type="term" value="F:protein serine kinase activity"/>
    <property type="evidence" value="ECO:0007669"/>
    <property type="project" value="RHEA"/>
</dbReference>
<dbReference type="GO" id="GO:0004674">
    <property type="term" value="F:protein serine/threonine kinase activity"/>
    <property type="evidence" value="ECO:0007669"/>
    <property type="project" value="UniProtKB-KW"/>
</dbReference>
<dbReference type="GO" id="GO:0002229">
    <property type="term" value="P:defense response to oomycetes"/>
    <property type="evidence" value="ECO:0000315"/>
    <property type="project" value="UniProtKB"/>
</dbReference>
<dbReference type="CDD" id="cd06899">
    <property type="entry name" value="lectin_legume_LecRK_Arcelin_ConA"/>
    <property type="match status" value="1"/>
</dbReference>
<dbReference type="FunFam" id="3.30.200.20:FF:000451">
    <property type="entry name" value="L-type lectin-domain containing receptor kinase I.9"/>
    <property type="match status" value="1"/>
</dbReference>
<dbReference type="FunFam" id="1.10.510.10:FF:000108">
    <property type="entry name" value="L-type lectin-domain containing receptor kinase S.4"/>
    <property type="match status" value="1"/>
</dbReference>
<dbReference type="FunFam" id="2.60.120.200:FF:000096">
    <property type="entry name" value="L-type lectin-domain containing receptor kinase V.9"/>
    <property type="match status" value="1"/>
</dbReference>
<dbReference type="Gene3D" id="2.60.120.200">
    <property type="match status" value="1"/>
</dbReference>
<dbReference type="Gene3D" id="3.30.200.20">
    <property type="entry name" value="Phosphorylase Kinase, domain 1"/>
    <property type="match status" value="1"/>
</dbReference>
<dbReference type="Gene3D" id="1.10.510.10">
    <property type="entry name" value="Transferase(Phosphotransferase) domain 1"/>
    <property type="match status" value="1"/>
</dbReference>
<dbReference type="InterPro" id="IPR013320">
    <property type="entry name" value="ConA-like_dom_sf"/>
</dbReference>
<dbReference type="InterPro" id="IPR011009">
    <property type="entry name" value="Kinase-like_dom_sf"/>
</dbReference>
<dbReference type="InterPro" id="IPR050528">
    <property type="entry name" value="L-type_Lectin-RKs"/>
</dbReference>
<dbReference type="InterPro" id="IPR001220">
    <property type="entry name" value="Legume_lectin_dom"/>
</dbReference>
<dbReference type="InterPro" id="IPR000719">
    <property type="entry name" value="Prot_kinase_dom"/>
</dbReference>
<dbReference type="InterPro" id="IPR017441">
    <property type="entry name" value="Protein_kinase_ATP_BS"/>
</dbReference>
<dbReference type="InterPro" id="IPR001245">
    <property type="entry name" value="Ser-Thr/Tyr_kinase_cat_dom"/>
</dbReference>
<dbReference type="InterPro" id="IPR008271">
    <property type="entry name" value="Ser/Thr_kinase_AS"/>
</dbReference>
<dbReference type="PANTHER" id="PTHR27007">
    <property type="match status" value="1"/>
</dbReference>
<dbReference type="Pfam" id="PF00139">
    <property type="entry name" value="Lectin_legB"/>
    <property type="match status" value="1"/>
</dbReference>
<dbReference type="Pfam" id="PF07714">
    <property type="entry name" value="PK_Tyr_Ser-Thr"/>
    <property type="match status" value="1"/>
</dbReference>
<dbReference type="SMART" id="SM00220">
    <property type="entry name" value="S_TKc"/>
    <property type="match status" value="1"/>
</dbReference>
<dbReference type="SUPFAM" id="SSF49899">
    <property type="entry name" value="Concanavalin A-like lectins/glucanases"/>
    <property type="match status" value="1"/>
</dbReference>
<dbReference type="SUPFAM" id="SSF56112">
    <property type="entry name" value="Protein kinase-like (PK-like)"/>
    <property type="match status" value="1"/>
</dbReference>
<dbReference type="PROSITE" id="PS00307">
    <property type="entry name" value="LECTIN_LEGUME_BETA"/>
    <property type="match status" value="1"/>
</dbReference>
<dbReference type="PROSITE" id="PS00107">
    <property type="entry name" value="PROTEIN_KINASE_ATP"/>
    <property type="match status" value="1"/>
</dbReference>
<dbReference type="PROSITE" id="PS50011">
    <property type="entry name" value="PROTEIN_KINASE_DOM"/>
    <property type="match status" value="1"/>
</dbReference>
<dbReference type="PROSITE" id="PS00108">
    <property type="entry name" value="PROTEIN_KINASE_ST"/>
    <property type="match status" value="1"/>
</dbReference>
<gene>
    <name evidence="5" type="primary">LECRK17</name>
    <name evidence="7" type="ordered locus">At5g60270</name>
    <name evidence="8" type="ORF">F15L12.9</name>
</gene>
<comment type="function">
    <text evidence="4">Involved in resistance response to the pathogenic oomycetes Phytophthora infestans and Phytophthora capsici.</text>
</comment>
<comment type="catalytic activity">
    <reaction evidence="3">
        <text>L-seryl-[protein] + ATP = O-phospho-L-seryl-[protein] + ADP + H(+)</text>
        <dbReference type="Rhea" id="RHEA:17989"/>
        <dbReference type="Rhea" id="RHEA-COMP:9863"/>
        <dbReference type="Rhea" id="RHEA-COMP:11604"/>
        <dbReference type="ChEBI" id="CHEBI:15378"/>
        <dbReference type="ChEBI" id="CHEBI:29999"/>
        <dbReference type="ChEBI" id="CHEBI:30616"/>
        <dbReference type="ChEBI" id="CHEBI:83421"/>
        <dbReference type="ChEBI" id="CHEBI:456216"/>
        <dbReference type="EC" id="2.7.11.1"/>
    </reaction>
</comment>
<comment type="catalytic activity">
    <reaction evidence="3">
        <text>L-threonyl-[protein] + ATP = O-phospho-L-threonyl-[protein] + ADP + H(+)</text>
        <dbReference type="Rhea" id="RHEA:46608"/>
        <dbReference type="Rhea" id="RHEA-COMP:11060"/>
        <dbReference type="Rhea" id="RHEA-COMP:11605"/>
        <dbReference type="ChEBI" id="CHEBI:15378"/>
        <dbReference type="ChEBI" id="CHEBI:30013"/>
        <dbReference type="ChEBI" id="CHEBI:30616"/>
        <dbReference type="ChEBI" id="CHEBI:61977"/>
        <dbReference type="ChEBI" id="CHEBI:456216"/>
        <dbReference type="EC" id="2.7.11.1"/>
    </reaction>
</comment>
<comment type="subcellular location">
    <subcellularLocation>
        <location evidence="1">Cell membrane</location>
        <topology evidence="2">Single-pass type I membrane protein</topology>
    </subcellularLocation>
</comment>
<comment type="disruption phenotype">
    <text evidence="4">Increased susceptibility to the oomycetes Phytophthora brassicae and Phytophthora capsici.</text>
</comment>
<comment type="similarity">
    <text evidence="6">In the C-terminal section; belongs to the protein kinase superfamily. Ser/Thr protein kinase family.</text>
</comment>
<comment type="similarity">
    <text evidence="6">In the N-terminal section; belongs to the leguminous lectin family.</text>
</comment>
<evidence type="ECO:0000250" key="1">
    <source>
        <dbReference type="UniProtKB" id="Q9LSR8"/>
    </source>
</evidence>
<evidence type="ECO:0000255" key="2"/>
<evidence type="ECO:0000255" key="3">
    <source>
        <dbReference type="PROSITE-ProRule" id="PRU00159"/>
    </source>
</evidence>
<evidence type="ECO:0000269" key="4">
    <source>
    </source>
</evidence>
<evidence type="ECO:0000303" key="5">
    <source>
    </source>
</evidence>
<evidence type="ECO:0000305" key="6"/>
<evidence type="ECO:0000312" key="7">
    <source>
        <dbReference type="Araport" id="AT5G60270"/>
    </source>
</evidence>
<evidence type="ECO:0000312" key="8">
    <source>
        <dbReference type="EMBL" id="BAA97507.1"/>
    </source>
</evidence>
<organism>
    <name type="scientific">Arabidopsis thaliana</name>
    <name type="common">Mouse-ear cress</name>
    <dbReference type="NCBI Taxonomy" id="3702"/>
    <lineage>
        <taxon>Eukaryota</taxon>
        <taxon>Viridiplantae</taxon>
        <taxon>Streptophyta</taxon>
        <taxon>Embryophyta</taxon>
        <taxon>Tracheophyta</taxon>
        <taxon>Spermatophyta</taxon>
        <taxon>Magnoliopsida</taxon>
        <taxon>eudicotyledons</taxon>
        <taxon>Gunneridae</taxon>
        <taxon>Pentapetalae</taxon>
        <taxon>rosids</taxon>
        <taxon>malvids</taxon>
        <taxon>Brassicales</taxon>
        <taxon>Brassicaceae</taxon>
        <taxon>Camelineae</taxon>
        <taxon>Arabidopsis</taxon>
    </lineage>
</organism>
<proteinExistence type="evidence at transcript level"/>
<reference key="1">
    <citation type="submission" date="1999-04" db="EMBL/GenBank/DDBJ databases">
        <title>Structural analysis of Arabidopsis thaliana chromosome 5. XI.</title>
        <authorList>
            <person name="Kaneko T."/>
            <person name="Katoh T."/>
            <person name="Asamizu E."/>
            <person name="Sato S."/>
            <person name="Nakamura Y."/>
            <person name="Kotani H."/>
            <person name="Tabata S."/>
        </authorList>
    </citation>
    <scope>NUCLEOTIDE SEQUENCE [LARGE SCALE GENOMIC DNA]</scope>
    <source>
        <strain>cv. Columbia</strain>
    </source>
</reference>
<reference key="2">
    <citation type="journal article" date="2017" name="Plant J.">
        <title>Araport11: a complete reannotation of the Arabidopsis thaliana reference genome.</title>
        <authorList>
            <person name="Cheng C.Y."/>
            <person name="Krishnakumar V."/>
            <person name="Chan A.P."/>
            <person name="Thibaud-Nissen F."/>
            <person name="Schobel S."/>
            <person name="Town C.D."/>
        </authorList>
    </citation>
    <scope>GENOME REANNOTATION</scope>
    <source>
        <strain>cv. Columbia</strain>
    </source>
</reference>
<reference key="3">
    <citation type="submission" date="2004-09" db="EMBL/GenBank/DDBJ databases">
        <title>Large-scale analysis of RIKEN Arabidopsis full-length (RAFL) cDNAs.</title>
        <authorList>
            <person name="Totoki Y."/>
            <person name="Seki M."/>
            <person name="Ishida J."/>
            <person name="Nakajima M."/>
            <person name="Enju A."/>
            <person name="Kamiya A."/>
            <person name="Narusaka M."/>
            <person name="Shin-i T."/>
            <person name="Nakagawa M."/>
            <person name="Sakamoto N."/>
            <person name="Oishi K."/>
            <person name="Kohara Y."/>
            <person name="Kobayashi M."/>
            <person name="Toyoda A."/>
            <person name="Sakaki Y."/>
            <person name="Sakurai T."/>
            <person name="Iida K."/>
            <person name="Akiyama K."/>
            <person name="Satou M."/>
            <person name="Toyoda T."/>
            <person name="Konagaya A."/>
            <person name="Carninci P."/>
            <person name="Kawai J."/>
            <person name="Hayashizaki Y."/>
            <person name="Shinozaki K."/>
        </authorList>
    </citation>
    <scope>NUCLEOTIDE SEQUENCE [LARGE SCALE MRNA]</scope>
    <source>
        <strain>cv. Columbia</strain>
    </source>
</reference>
<reference key="4">
    <citation type="journal article" date="2002" name="Crit. Rev. Plant Sci.">
        <title>Lectin receptor kinases in plants.</title>
        <authorList>
            <person name="Barre A."/>
            <person name="Herve C."/>
            <person name="Lescure B."/>
            <person name="Rouge P."/>
        </authorList>
    </citation>
    <scope>GENE FAMILY</scope>
</reference>
<reference key="5">
    <citation type="journal article" date="2009" name="J. Exp. Bot.">
        <title>Arabidopsis L-type lectin receptor kinases: phylogeny, classification, and expression profiles.</title>
        <authorList>
            <person name="Bouwmeester K."/>
            <person name="Govers F."/>
        </authorList>
    </citation>
    <scope>GENE FAMILY</scope>
    <scope>NOMENCLATURE</scope>
</reference>
<reference key="6">
    <citation type="journal article" date="2014" name="Mol. Plant Microbe Interact.">
        <title>Phenotypic analyses of Arabidopsis T-DNA insertion lines and expression profiling reveal that multiple L-type lectin receptor kinases are involved in plant immunity.</title>
        <authorList>
            <person name="Wang Y."/>
            <person name="Bouwmeester K."/>
            <person name="Beseh P."/>
            <person name="Shan W."/>
            <person name="Govers F."/>
        </authorList>
    </citation>
    <scope>FUNCTION</scope>
    <scope>DISRUPTION PHENOTYPE</scope>
    <source>
        <strain>cv. Columbia</strain>
    </source>
</reference>
<name>LRK17_ARATH</name>
<accession>Q9LSS0</accession>
<sequence length="668" mass="73955">MIRGLLLGIIWMIFCVCSSFQQETPFVYNNFGHVDHLHLDGSARIIPSGGILQLTNATNSQIGHVFYEKPIEFKSSESVSFSTYFVCALLPAGDPSGHGMTFFVSHSTDFKGAEATRYFGIFNRNGSTSTRVLAVELDTSLASDVKDISDNHVGIDVNSAESITSANASYFSDKEGKKIDIKLLSGDPIQVWVDYEGTTLNVSLAPLRNKKPSRPLLSSTSINLTDILQGRRMFVGFSGSTGSSMSYQYILGWSFSKSMASLPNIDISKLPKVPHSSTKKKSTSPVLSVLLGLIAFIVLGILVVAYLYRRNLYSEVREEWEKEYGPIRYSYKSLYKATKGFNRSEFLGRGGFGEVYKGTLPRSRELREVAVKRVSHDGEHGMKQFVAEIVSMRSLKHRSLVPLLGYCRRKHELLLVSEYMPNGSLDHYLFNHDRLSLPWWRRLAILRDIASALSYLHTEADQVVIHRDIKAANVMLDAEFNGRLGDFGMSRLYDRGADPSTTAAVGTVGYMAPELTTMGASTGTDVYAFGVFLLEVTCGRRPVEPGLPEAKRFLIKWVSECWKRSSLIDARDPRLTEFSSQEVEKVLKLGLLCANLAPDSRPAMEQVVQYLNGNLALPEFWPNSPGIGVLSPMALSPAPLVIPSLSFSSSSSNNSMFITHSVLYGSGR</sequence>
<protein>
    <recommendedName>
        <fullName evidence="5">L-type lectin-domain containing receptor kinase I.7</fullName>
        <shortName evidence="5">LecRK-I.7</shortName>
        <ecNumber evidence="3">2.7.11.1</ecNumber>
    </recommendedName>
</protein>